<comment type="function">
    <text evidence="1">GTPase that plays an essential role in the late steps of ribosome biogenesis.</text>
</comment>
<comment type="subunit">
    <text evidence="1">Associates with the 50S ribosomal subunit.</text>
</comment>
<comment type="similarity">
    <text evidence="1">Belongs to the TRAFAC class TrmE-Era-EngA-EngB-Septin-like GTPase superfamily. EngA (Der) GTPase family.</text>
</comment>
<feature type="chain" id="PRO_1000011619" description="GTPase Der">
    <location>
        <begin position="1"/>
        <end position="490"/>
    </location>
</feature>
<feature type="domain" description="EngA-type G 1">
    <location>
        <begin position="3"/>
        <end position="166"/>
    </location>
</feature>
<feature type="domain" description="EngA-type G 2">
    <location>
        <begin position="203"/>
        <end position="376"/>
    </location>
</feature>
<feature type="domain" description="KH-like" evidence="1">
    <location>
        <begin position="377"/>
        <end position="461"/>
    </location>
</feature>
<feature type="binding site" evidence="1">
    <location>
        <begin position="9"/>
        <end position="16"/>
    </location>
    <ligand>
        <name>GTP</name>
        <dbReference type="ChEBI" id="CHEBI:37565"/>
        <label>1</label>
    </ligand>
</feature>
<feature type="binding site" evidence="1">
    <location>
        <begin position="56"/>
        <end position="60"/>
    </location>
    <ligand>
        <name>GTP</name>
        <dbReference type="ChEBI" id="CHEBI:37565"/>
        <label>1</label>
    </ligand>
</feature>
<feature type="binding site" evidence="1">
    <location>
        <begin position="118"/>
        <end position="121"/>
    </location>
    <ligand>
        <name>GTP</name>
        <dbReference type="ChEBI" id="CHEBI:37565"/>
        <label>1</label>
    </ligand>
</feature>
<feature type="binding site" evidence="1">
    <location>
        <begin position="209"/>
        <end position="216"/>
    </location>
    <ligand>
        <name>GTP</name>
        <dbReference type="ChEBI" id="CHEBI:37565"/>
        <label>2</label>
    </ligand>
</feature>
<feature type="binding site" evidence="1">
    <location>
        <begin position="256"/>
        <end position="260"/>
    </location>
    <ligand>
        <name>GTP</name>
        <dbReference type="ChEBI" id="CHEBI:37565"/>
        <label>2</label>
    </ligand>
</feature>
<feature type="binding site" evidence="1">
    <location>
        <begin position="321"/>
        <end position="324"/>
    </location>
    <ligand>
        <name>GTP</name>
        <dbReference type="ChEBI" id="CHEBI:37565"/>
        <label>2</label>
    </ligand>
</feature>
<name>DER_ECOL5</name>
<keyword id="KW-0342">GTP-binding</keyword>
<keyword id="KW-0547">Nucleotide-binding</keyword>
<keyword id="KW-0677">Repeat</keyword>
<keyword id="KW-0690">Ribosome biogenesis</keyword>
<accession>Q0TEX4</accession>
<evidence type="ECO:0000255" key="1">
    <source>
        <dbReference type="HAMAP-Rule" id="MF_00195"/>
    </source>
</evidence>
<gene>
    <name evidence="1" type="primary">der</name>
    <name type="synonym">engA</name>
    <name type="ordered locus">ECP_2516</name>
</gene>
<sequence length="490" mass="54993">MVPVVALVGRPNVGKSTLFNRLTRTRDALVADFPGLTRDRKYGRAEIEGREFICIDTGGIDGTEDGVETRMAEQSLLAIEEADVVLFMVDARAGLMPADEAIAKHLRSREKPTFLVANKTDGLDPDQAVVDFYALGLGEIYPIAASHGRGVLSLLEHVLLPWMEDLAPQEEVDEDAEYWAQFEAEENGEEEEEDDFDPQSLPIKLAIVGRPNVGKSTLTNRILGEERVVVYDMPGTTRDSIYIPMERDGREYVLIDTAGVRKRGKITDAVEKFSVIKTLQAIEDANVVMLVIDAREGISDQDLSLLGFILNSGRSLVIVVNKWDGLSQEVKEQVKETLDFRLGFIDFARVHFISALHGSGVGNLFESVREAYDSSTRRVGTSMLTRIMTMAVEDHQPPLVRGRRVKLKYAHAGGYNPPIVVIHGNQVKDLPDSYKRYLMNYFRKSLDVMGSPIRIQFKEGENPYANKRNTLTPTQMRKRKRLMKHIKKSK</sequence>
<dbReference type="EMBL" id="CP000247">
    <property type="protein sequence ID" value="ABG70505.1"/>
    <property type="molecule type" value="Genomic_DNA"/>
</dbReference>
<dbReference type="RefSeq" id="WP_001296291.1">
    <property type="nucleotide sequence ID" value="NC_008253.1"/>
</dbReference>
<dbReference type="SMR" id="Q0TEX4"/>
<dbReference type="KEGG" id="ecp:ECP_2516"/>
<dbReference type="HOGENOM" id="CLU_016077_6_2_6"/>
<dbReference type="Proteomes" id="UP000009182">
    <property type="component" value="Chromosome"/>
</dbReference>
<dbReference type="GO" id="GO:0005525">
    <property type="term" value="F:GTP binding"/>
    <property type="evidence" value="ECO:0007669"/>
    <property type="project" value="UniProtKB-UniRule"/>
</dbReference>
<dbReference type="GO" id="GO:0043022">
    <property type="term" value="F:ribosome binding"/>
    <property type="evidence" value="ECO:0007669"/>
    <property type="project" value="TreeGrafter"/>
</dbReference>
<dbReference type="GO" id="GO:0042254">
    <property type="term" value="P:ribosome biogenesis"/>
    <property type="evidence" value="ECO:0007669"/>
    <property type="project" value="UniProtKB-KW"/>
</dbReference>
<dbReference type="CDD" id="cd01894">
    <property type="entry name" value="EngA1"/>
    <property type="match status" value="1"/>
</dbReference>
<dbReference type="CDD" id="cd01895">
    <property type="entry name" value="EngA2"/>
    <property type="match status" value="1"/>
</dbReference>
<dbReference type="FunFam" id="3.30.300.20:FF:000004">
    <property type="entry name" value="GTPase Der"/>
    <property type="match status" value="1"/>
</dbReference>
<dbReference type="FunFam" id="3.40.50.300:FF:000040">
    <property type="entry name" value="GTPase Der"/>
    <property type="match status" value="1"/>
</dbReference>
<dbReference type="FunFam" id="3.40.50.300:FF:000057">
    <property type="entry name" value="GTPase Der"/>
    <property type="match status" value="1"/>
</dbReference>
<dbReference type="Gene3D" id="3.30.300.20">
    <property type="match status" value="1"/>
</dbReference>
<dbReference type="Gene3D" id="3.40.50.300">
    <property type="entry name" value="P-loop containing nucleotide triphosphate hydrolases"/>
    <property type="match status" value="2"/>
</dbReference>
<dbReference type="HAMAP" id="MF_00195">
    <property type="entry name" value="GTPase_Der"/>
    <property type="match status" value="1"/>
</dbReference>
<dbReference type="InterPro" id="IPR031166">
    <property type="entry name" value="G_ENGA"/>
</dbReference>
<dbReference type="InterPro" id="IPR006073">
    <property type="entry name" value="GTP-bd"/>
</dbReference>
<dbReference type="InterPro" id="IPR016484">
    <property type="entry name" value="GTPase_Der"/>
</dbReference>
<dbReference type="InterPro" id="IPR032859">
    <property type="entry name" value="KH_dom-like"/>
</dbReference>
<dbReference type="InterPro" id="IPR015946">
    <property type="entry name" value="KH_dom-like_a/b"/>
</dbReference>
<dbReference type="InterPro" id="IPR027417">
    <property type="entry name" value="P-loop_NTPase"/>
</dbReference>
<dbReference type="InterPro" id="IPR005225">
    <property type="entry name" value="Small_GTP-bd"/>
</dbReference>
<dbReference type="NCBIfam" id="TIGR03594">
    <property type="entry name" value="GTPase_EngA"/>
    <property type="match status" value="1"/>
</dbReference>
<dbReference type="NCBIfam" id="TIGR00231">
    <property type="entry name" value="small_GTP"/>
    <property type="match status" value="2"/>
</dbReference>
<dbReference type="PANTHER" id="PTHR43834">
    <property type="entry name" value="GTPASE DER"/>
    <property type="match status" value="1"/>
</dbReference>
<dbReference type="PANTHER" id="PTHR43834:SF6">
    <property type="entry name" value="GTPASE DER"/>
    <property type="match status" value="1"/>
</dbReference>
<dbReference type="Pfam" id="PF14714">
    <property type="entry name" value="KH_dom-like"/>
    <property type="match status" value="1"/>
</dbReference>
<dbReference type="Pfam" id="PF01926">
    <property type="entry name" value="MMR_HSR1"/>
    <property type="match status" value="2"/>
</dbReference>
<dbReference type="PIRSF" id="PIRSF006485">
    <property type="entry name" value="GTP-binding_EngA"/>
    <property type="match status" value="1"/>
</dbReference>
<dbReference type="PRINTS" id="PR00326">
    <property type="entry name" value="GTP1OBG"/>
</dbReference>
<dbReference type="SUPFAM" id="SSF52540">
    <property type="entry name" value="P-loop containing nucleoside triphosphate hydrolases"/>
    <property type="match status" value="2"/>
</dbReference>
<dbReference type="PROSITE" id="PS51712">
    <property type="entry name" value="G_ENGA"/>
    <property type="match status" value="2"/>
</dbReference>
<protein>
    <recommendedName>
        <fullName evidence="1">GTPase Der</fullName>
    </recommendedName>
    <alternativeName>
        <fullName evidence="1">GTP-binding protein EngA</fullName>
    </alternativeName>
</protein>
<proteinExistence type="inferred from homology"/>
<reference key="1">
    <citation type="journal article" date="2006" name="Mol. Microbiol.">
        <title>Role of pathogenicity island-associated integrases in the genome plasticity of uropathogenic Escherichia coli strain 536.</title>
        <authorList>
            <person name="Hochhut B."/>
            <person name="Wilde C."/>
            <person name="Balling G."/>
            <person name="Middendorf B."/>
            <person name="Dobrindt U."/>
            <person name="Brzuszkiewicz E."/>
            <person name="Gottschalk G."/>
            <person name="Carniel E."/>
            <person name="Hacker J."/>
        </authorList>
    </citation>
    <scope>NUCLEOTIDE SEQUENCE [LARGE SCALE GENOMIC DNA]</scope>
    <source>
        <strain>536 / UPEC</strain>
    </source>
</reference>
<organism>
    <name type="scientific">Escherichia coli O6:K15:H31 (strain 536 / UPEC)</name>
    <dbReference type="NCBI Taxonomy" id="362663"/>
    <lineage>
        <taxon>Bacteria</taxon>
        <taxon>Pseudomonadati</taxon>
        <taxon>Pseudomonadota</taxon>
        <taxon>Gammaproteobacteria</taxon>
        <taxon>Enterobacterales</taxon>
        <taxon>Enterobacteriaceae</taxon>
        <taxon>Escherichia</taxon>
    </lineage>
</organism>